<proteinExistence type="inferred from homology"/>
<protein>
    <recommendedName>
        <fullName evidence="1">Ribonuclease PH</fullName>
        <shortName evidence="1">RNase PH</shortName>
        <ecNumber evidence="1">2.7.7.56</ecNumber>
    </recommendedName>
    <alternativeName>
        <fullName evidence="1">tRNA nucleotidyltransferase</fullName>
    </alternativeName>
</protein>
<evidence type="ECO:0000255" key="1">
    <source>
        <dbReference type="HAMAP-Rule" id="MF_00564"/>
    </source>
</evidence>
<gene>
    <name evidence="1" type="primary">rph</name>
    <name type="ordered locus">IL2425</name>
</gene>
<accession>Q5QYL5</accession>
<organism>
    <name type="scientific">Idiomarina loihiensis (strain ATCC BAA-735 / DSM 15497 / L2-TR)</name>
    <dbReference type="NCBI Taxonomy" id="283942"/>
    <lineage>
        <taxon>Bacteria</taxon>
        <taxon>Pseudomonadati</taxon>
        <taxon>Pseudomonadota</taxon>
        <taxon>Gammaproteobacteria</taxon>
        <taxon>Alteromonadales</taxon>
        <taxon>Idiomarinaceae</taxon>
        <taxon>Idiomarina</taxon>
    </lineage>
</organism>
<dbReference type="EC" id="2.7.7.56" evidence="1"/>
<dbReference type="EMBL" id="AE017340">
    <property type="protein sequence ID" value="AAV83257.1"/>
    <property type="molecule type" value="Genomic_DNA"/>
</dbReference>
<dbReference type="RefSeq" id="WP_011235651.1">
    <property type="nucleotide sequence ID" value="NC_006512.1"/>
</dbReference>
<dbReference type="SMR" id="Q5QYL5"/>
<dbReference type="STRING" id="283942.IL2425"/>
<dbReference type="GeneID" id="41337619"/>
<dbReference type="KEGG" id="ilo:IL2425"/>
<dbReference type="eggNOG" id="COG0689">
    <property type="taxonomic scope" value="Bacteria"/>
</dbReference>
<dbReference type="HOGENOM" id="CLU_050858_0_0_6"/>
<dbReference type="OrthoDB" id="9802265at2"/>
<dbReference type="Proteomes" id="UP000001171">
    <property type="component" value="Chromosome"/>
</dbReference>
<dbReference type="GO" id="GO:0000175">
    <property type="term" value="F:3'-5'-RNA exonuclease activity"/>
    <property type="evidence" value="ECO:0007669"/>
    <property type="project" value="UniProtKB-UniRule"/>
</dbReference>
<dbReference type="GO" id="GO:0000049">
    <property type="term" value="F:tRNA binding"/>
    <property type="evidence" value="ECO:0007669"/>
    <property type="project" value="UniProtKB-UniRule"/>
</dbReference>
<dbReference type="GO" id="GO:0009022">
    <property type="term" value="F:tRNA nucleotidyltransferase activity"/>
    <property type="evidence" value="ECO:0007669"/>
    <property type="project" value="UniProtKB-UniRule"/>
</dbReference>
<dbReference type="GO" id="GO:0016075">
    <property type="term" value="P:rRNA catabolic process"/>
    <property type="evidence" value="ECO:0007669"/>
    <property type="project" value="UniProtKB-UniRule"/>
</dbReference>
<dbReference type="GO" id="GO:0006364">
    <property type="term" value="P:rRNA processing"/>
    <property type="evidence" value="ECO:0007669"/>
    <property type="project" value="UniProtKB-KW"/>
</dbReference>
<dbReference type="GO" id="GO:0008033">
    <property type="term" value="P:tRNA processing"/>
    <property type="evidence" value="ECO:0007669"/>
    <property type="project" value="UniProtKB-UniRule"/>
</dbReference>
<dbReference type="CDD" id="cd11362">
    <property type="entry name" value="RNase_PH_bact"/>
    <property type="match status" value="1"/>
</dbReference>
<dbReference type="FunFam" id="3.30.230.70:FF:000003">
    <property type="entry name" value="Ribonuclease PH"/>
    <property type="match status" value="1"/>
</dbReference>
<dbReference type="Gene3D" id="3.30.230.70">
    <property type="entry name" value="GHMP Kinase, N-terminal domain"/>
    <property type="match status" value="1"/>
</dbReference>
<dbReference type="HAMAP" id="MF_00564">
    <property type="entry name" value="RNase_PH"/>
    <property type="match status" value="1"/>
</dbReference>
<dbReference type="InterPro" id="IPR001247">
    <property type="entry name" value="ExoRNase_PH_dom1"/>
</dbReference>
<dbReference type="InterPro" id="IPR015847">
    <property type="entry name" value="ExoRNase_PH_dom2"/>
</dbReference>
<dbReference type="InterPro" id="IPR036345">
    <property type="entry name" value="ExoRNase_PH_dom2_sf"/>
</dbReference>
<dbReference type="InterPro" id="IPR027408">
    <property type="entry name" value="PNPase/RNase_PH_dom_sf"/>
</dbReference>
<dbReference type="InterPro" id="IPR020568">
    <property type="entry name" value="Ribosomal_Su5_D2-typ_SF"/>
</dbReference>
<dbReference type="InterPro" id="IPR050080">
    <property type="entry name" value="RNase_PH"/>
</dbReference>
<dbReference type="InterPro" id="IPR002381">
    <property type="entry name" value="RNase_PH_bac-type"/>
</dbReference>
<dbReference type="InterPro" id="IPR018336">
    <property type="entry name" value="RNase_PH_CS"/>
</dbReference>
<dbReference type="NCBIfam" id="TIGR01966">
    <property type="entry name" value="RNasePH"/>
    <property type="match status" value="1"/>
</dbReference>
<dbReference type="PANTHER" id="PTHR11953">
    <property type="entry name" value="EXOSOME COMPLEX COMPONENT"/>
    <property type="match status" value="1"/>
</dbReference>
<dbReference type="PANTHER" id="PTHR11953:SF0">
    <property type="entry name" value="EXOSOME COMPLEX COMPONENT RRP41"/>
    <property type="match status" value="1"/>
</dbReference>
<dbReference type="Pfam" id="PF01138">
    <property type="entry name" value="RNase_PH"/>
    <property type="match status" value="1"/>
</dbReference>
<dbReference type="Pfam" id="PF03725">
    <property type="entry name" value="RNase_PH_C"/>
    <property type="match status" value="1"/>
</dbReference>
<dbReference type="SUPFAM" id="SSF55666">
    <property type="entry name" value="Ribonuclease PH domain 2-like"/>
    <property type="match status" value="1"/>
</dbReference>
<dbReference type="SUPFAM" id="SSF54211">
    <property type="entry name" value="Ribosomal protein S5 domain 2-like"/>
    <property type="match status" value="1"/>
</dbReference>
<dbReference type="PROSITE" id="PS01277">
    <property type="entry name" value="RIBONUCLEASE_PH"/>
    <property type="match status" value="1"/>
</dbReference>
<name>RNPH_IDILO</name>
<sequence length="237" mass="25855">MRPSGRTAQQIRPVTITRNFTKHAEGSVLIEFGETKVLCNASVERGVPRFLKGKGQGWVTAEYSMLPRATHTRSAREASRGKQGGRTLEIQRLIGRSLRTCIDMSALGEHTITIDCDVIQADGGTRTASITGACVALVDALNWMRAQGMVKVNPLKEMVAAISVGILDGEPVSDLEYIEDSKADTDMNIVMTEAGKFIEIQGTAEGEAFSFDEMNSLVEMARHSIRELIDIQKQALA</sequence>
<feature type="chain" id="PRO_0000139898" description="Ribonuclease PH">
    <location>
        <begin position="1"/>
        <end position="237"/>
    </location>
</feature>
<feature type="binding site" evidence="1">
    <location>
        <position position="86"/>
    </location>
    <ligand>
        <name>phosphate</name>
        <dbReference type="ChEBI" id="CHEBI:43474"/>
        <note>substrate</note>
    </ligand>
</feature>
<feature type="binding site" evidence="1">
    <location>
        <begin position="124"/>
        <end position="126"/>
    </location>
    <ligand>
        <name>phosphate</name>
        <dbReference type="ChEBI" id="CHEBI:43474"/>
        <note>substrate</note>
    </ligand>
</feature>
<reference key="1">
    <citation type="journal article" date="2004" name="Proc. Natl. Acad. Sci. U.S.A.">
        <title>Genome sequence of the deep-sea gamma-proteobacterium Idiomarina loihiensis reveals amino acid fermentation as a source of carbon and energy.</title>
        <authorList>
            <person name="Hou S."/>
            <person name="Saw J.H."/>
            <person name="Lee K.S."/>
            <person name="Freitas T.A."/>
            <person name="Belisle C."/>
            <person name="Kawarabayasi Y."/>
            <person name="Donachie S.P."/>
            <person name="Pikina A."/>
            <person name="Galperin M.Y."/>
            <person name="Koonin E.V."/>
            <person name="Makarova K.S."/>
            <person name="Omelchenko M.V."/>
            <person name="Sorokin A."/>
            <person name="Wolf Y.I."/>
            <person name="Li Q.X."/>
            <person name="Keum Y.S."/>
            <person name="Campbell S."/>
            <person name="Denery J."/>
            <person name="Aizawa S."/>
            <person name="Shibata S."/>
            <person name="Malahoff A."/>
            <person name="Alam M."/>
        </authorList>
    </citation>
    <scope>NUCLEOTIDE SEQUENCE [LARGE SCALE GENOMIC DNA]</scope>
    <source>
        <strain>ATCC BAA-735 / DSM 15497 / L2-TR</strain>
    </source>
</reference>
<comment type="function">
    <text evidence="1">Phosphorolytic 3'-5' exoribonuclease that plays an important role in tRNA 3'-end maturation. Removes nucleotide residues following the 3'-CCA terminus of tRNAs; can also add nucleotides to the ends of RNA molecules by using nucleoside diphosphates as substrates, but this may not be physiologically important. Probably plays a role in initiation of 16S rRNA degradation (leading to ribosome degradation) during starvation.</text>
</comment>
<comment type="catalytic activity">
    <reaction evidence="1">
        <text>tRNA(n+1) + phosphate = tRNA(n) + a ribonucleoside 5'-diphosphate</text>
        <dbReference type="Rhea" id="RHEA:10628"/>
        <dbReference type="Rhea" id="RHEA-COMP:17343"/>
        <dbReference type="Rhea" id="RHEA-COMP:17344"/>
        <dbReference type="ChEBI" id="CHEBI:43474"/>
        <dbReference type="ChEBI" id="CHEBI:57930"/>
        <dbReference type="ChEBI" id="CHEBI:173114"/>
        <dbReference type="EC" id="2.7.7.56"/>
    </reaction>
</comment>
<comment type="subunit">
    <text evidence="1">Homohexameric ring arranged as a trimer of dimers.</text>
</comment>
<comment type="similarity">
    <text evidence="1">Belongs to the RNase PH family.</text>
</comment>
<keyword id="KW-0548">Nucleotidyltransferase</keyword>
<keyword id="KW-1185">Reference proteome</keyword>
<keyword id="KW-0694">RNA-binding</keyword>
<keyword id="KW-0698">rRNA processing</keyword>
<keyword id="KW-0808">Transferase</keyword>
<keyword id="KW-0819">tRNA processing</keyword>
<keyword id="KW-0820">tRNA-binding</keyword>